<protein>
    <recommendedName>
        <fullName evidence="1">Adenosylcobinamide-GDP ribazoletransferase</fullName>
        <ecNumber evidence="1">2.7.8.26</ecNumber>
    </recommendedName>
    <alternativeName>
        <fullName evidence="1">Cobalamin synthase</fullName>
    </alternativeName>
    <alternativeName>
        <fullName evidence="1">Cobalamin-5'-phosphate synthase</fullName>
    </alternativeName>
</protein>
<name>COBS_BRUAB</name>
<feature type="chain" id="PRO_1000045760" description="Adenosylcobinamide-GDP ribazoletransferase">
    <location>
        <begin position="1"/>
        <end position="260"/>
    </location>
</feature>
<feature type="transmembrane region" description="Helical" evidence="1">
    <location>
        <begin position="42"/>
        <end position="62"/>
    </location>
</feature>
<feature type="transmembrane region" description="Helical" evidence="1">
    <location>
        <begin position="64"/>
        <end position="84"/>
    </location>
</feature>
<feature type="transmembrane region" description="Helical" evidence="1">
    <location>
        <begin position="117"/>
        <end position="137"/>
    </location>
</feature>
<feature type="transmembrane region" description="Helical" evidence="1">
    <location>
        <begin position="144"/>
        <end position="164"/>
    </location>
</feature>
<feature type="transmembrane region" description="Helical" evidence="1">
    <location>
        <begin position="192"/>
        <end position="212"/>
    </location>
</feature>
<feature type="transmembrane region" description="Helical" evidence="1">
    <location>
        <begin position="214"/>
        <end position="234"/>
    </location>
</feature>
<feature type="transmembrane region" description="Helical" evidence="1">
    <location>
        <begin position="240"/>
        <end position="260"/>
    </location>
</feature>
<reference key="1">
    <citation type="journal article" date="2005" name="J. Bacteriol.">
        <title>Completion of the genome sequence of Brucella abortus and comparison to the highly similar genomes of Brucella melitensis and Brucella suis.</title>
        <authorList>
            <person name="Halling S.M."/>
            <person name="Peterson-Burch B.D."/>
            <person name="Bricker B.J."/>
            <person name="Zuerner R.L."/>
            <person name="Qing Z."/>
            <person name="Li L.-L."/>
            <person name="Kapur V."/>
            <person name="Alt D.P."/>
            <person name="Olsen S.C."/>
        </authorList>
    </citation>
    <scope>NUCLEOTIDE SEQUENCE [LARGE SCALE GENOMIC DNA]</scope>
    <source>
        <strain>9-941</strain>
    </source>
</reference>
<evidence type="ECO:0000255" key="1">
    <source>
        <dbReference type="HAMAP-Rule" id="MF_00719"/>
    </source>
</evidence>
<organism>
    <name type="scientific">Brucella abortus biovar 1 (strain 9-941)</name>
    <dbReference type="NCBI Taxonomy" id="262698"/>
    <lineage>
        <taxon>Bacteria</taxon>
        <taxon>Pseudomonadati</taxon>
        <taxon>Pseudomonadota</taxon>
        <taxon>Alphaproteobacteria</taxon>
        <taxon>Hyphomicrobiales</taxon>
        <taxon>Brucellaceae</taxon>
        <taxon>Brucella/Ochrobactrum group</taxon>
        <taxon>Brucella</taxon>
    </lineage>
</organism>
<dbReference type="EC" id="2.7.8.26" evidence="1"/>
<dbReference type="EMBL" id="AE017223">
    <property type="protein sequence ID" value="AAX74244.1"/>
    <property type="molecule type" value="Genomic_DNA"/>
</dbReference>
<dbReference type="RefSeq" id="WP_002963996.1">
    <property type="nucleotide sequence ID" value="NC_006932.1"/>
</dbReference>
<dbReference type="EnsemblBacteria" id="AAX74244">
    <property type="protein sequence ID" value="AAX74244"/>
    <property type="gene ID" value="BruAb1_0878"/>
</dbReference>
<dbReference type="KEGG" id="bmb:BruAb1_0878"/>
<dbReference type="HOGENOM" id="CLU_057426_1_0_5"/>
<dbReference type="UniPathway" id="UPA00148">
    <property type="reaction ID" value="UER00238"/>
</dbReference>
<dbReference type="Proteomes" id="UP000000540">
    <property type="component" value="Chromosome I"/>
</dbReference>
<dbReference type="GO" id="GO:0005886">
    <property type="term" value="C:plasma membrane"/>
    <property type="evidence" value="ECO:0007669"/>
    <property type="project" value="UniProtKB-SubCell"/>
</dbReference>
<dbReference type="GO" id="GO:0051073">
    <property type="term" value="F:adenosylcobinamide-GDP ribazoletransferase activity"/>
    <property type="evidence" value="ECO:0007669"/>
    <property type="project" value="UniProtKB-UniRule"/>
</dbReference>
<dbReference type="GO" id="GO:0008818">
    <property type="term" value="F:cobalamin 5'-phosphate synthase activity"/>
    <property type="evidence" value="ECO:0007669"/>
    <property type="project" value="UniProtKB-UniRule"/>
</dbReference>
<dbReference type="GO" id="GO:0009236">
    <property type="term" value="P:cobalamin biosynthetic process"/>
    <property type="evidence" value="ECO:0007669"/>
    <property type="project" value="UniProtKB-UniRule"/>
</dbReference>
<dbReference type="HAMAP" id="MF_00719">
    <property type="entry name" value="CobS"/>
    <property type="match status" value="1"/>
</dbReference>
<dbReference type="InterPro" id="IPR003805">
    <property type="entry name" value="CobS"/>
</dbReference>
<dbReference type="NCBIfam" id="TIGR00317">
    <property type="entry name" value="cobS"/>
    <property type="match status" value="1"/>
</dbReference>
<dbReference type="NCBIfam" id="NF001276">
    <property type="entry name" value="PRK00235.1-2"/>
    <property type="match status" value="1"/>
</dbReference>
<dbReference type="PANTHER" id="PTHR34148">
    <property type="entry name" value="ADENOSYLCOBINAMIDE-GDP RIBAZOLETRANSFERASE"/>
    <property type="match status" value="1"/>
</dbReference>
<dbReference type="PANTHER" id="PTHR34148:SF1">
    <property type="entry name" value="ADENOSYLCOBINAMIDE-GDP RIBAZOLETRANSFERASE"/>
    <property type="match status" value="1"/>
</dbReference>
<dbReference type="Pfam" id="PF02654">
    <property type="entry name" value="CobS"/>
    <property type="match status" value="1"/>
</dbReference>
<proteinExistence type="inferred from homology"/>
<sequence length="260" mass="26404">MQRNGLIGDTIRSLGFLSRLPLPQGWFDNTDDSLPRNARAFPLAGGILGLLAGVALLIANAISLPPLAAALIAIGALAAMTGALHEDGLGDTADGFFGASTPDRRLDIMKDSRIGTFAALTLVIWTGVKASLLMAIIARAGAGYALLALIGTEAASRAGMLAFWHALPSARPGGLADSMGQPQWETVVCGCGLGLALLAIGFLPSGGMVALINALVLMTVVLFGFARLCMAKIGGQTGDTLGAAQQIGSLAALIGLVMAL</sequence>
<comment type="function">
    <text evidence="1">Joins adenosylcobinamide-GDP and alpha-ribazole to generate adenosylcobalamin (Ado-cobalamin). Also synthesizes adenosylcobalamin 5'-phosphate from adenosylcobinamide-GDP and alpha-ribazole 5'-phosphate.</text>
</comment>
<comment type="catalytic activity">
    <reaction evidence="1">
        <text>alpha-ribazole + adenosylcob(III)inamide-GDP = adenosylcob(III)alamin + GMP + H(+)</text>
        <dbReference type="Rhea" id="RHEA:16049"/>
        <dbReference type="ChEBI" id="CHEBI:10329"/>
        <dbReference type="ChEBI" id="CHEBI:15378"/>
        <dbReference type="ChEBI" id="CHEBI:18408"/>
        <dbReference type="ChEBI" id="CHEBI:58115"/>
        <dbReference type="ChEBI" id="CHEBI:60487"/>
        <dbReference type="EC" id="2.7.8.26"/>
    </reaction>
</comment>
<comment type="catalytic activity">
    <reaction evidence="1">
        <text>alpha-ribazole 5'-phosphate + adenosylcob(III)inamide-GDP = adenosylcob(III)alamin 5'-phosphate + GMP + H(+)</text>
        <dbReference type="Rhea" id="RHEA:23560"/>
        <dbReference type="ChEBI" id="CHEBI:15378"/>
        <dbReference type="ChEBI" id="CHEBI:57918"/>
        <dbReference type="ChEBI" id="CHEBI:58115"/>
        <dbReference type="ChEBI" id="CHEBI:60487"/>
        <dbReference type="ChEBI" id="CHEBI:60493"/>
        <dbReference type="EC" id="2.7.8.26"/>
    </reaction>
</comment>
<comment type="cofactor">
    <cofactor evidence="1">
        <name>Mg(2+)</name>
        <dbReference type="ChEBI" id="CHEBI:18420"/>
    </cofactor>
</comment>
<comment type="pathway">
    <text evidence="1">Cofactor biosynthesis; adenosylcobalamin biosynthesis; adenosylcobalamin from cob(II)yrinate a,c-diamide: step 7/7.</text>
</comment>
<comment type="subcellular location">
    <subcellularLocation>
        <location evidence="1">Cell inner membrane</location>
        <topology evidence="1">Multi-pass membrane protein</topology>
    </subcellularLocation>
</comment>
<comment type="similarity">
    <text evidence="1">Belongs to the CobS family.</text>
</comment>
<accession>Q57DP0</accession>
<gene>
    <name evidence="1" type="primary">cobS</name>
    <name type="ordered locus">BruAb1_0878</name>
</gene>
<keyword id="KW-0997">Cell inner membrane</keyword>
<keyword id="KW-1003">Cell membrane</keyword>
<keyword id="KW-0169">Cobalamin biosynthesis</keyword>
<keyword id="KW-0460">Magnesium</keyword>
<keyword id="KW-0472">Membrane</keyword>
<keyword id="KW-0808">Transferase</keyword>
<keyword id="KW-0812">Transmembrane</keyword>
<keyword id="KW-1133">Transmembrane helix</keyword>